<gene>
    <name evidence="1" type="primary">atpA</name>
</gene>
<geneLocation type="chloroplast"/>
<dbReference type="EC" id="7.1.2.2" evidence="1"/>
<dbReference type="EMBL" id="DQ899947">
    <property type="protein sequence ID" value="ABI32494.1"/>
    <property type="molecule type" value="Genomic_DNA"/>
</dbReference>
<dbReference type="RefSeq" id="YP_740187.1">
    <property type="nucleotide sequence ID" value="NC_008326.1"/>
</dbReference>
<dbReference type="SMR" id="Q0G9N4"/>
<dbReference type="GeneID" id="4266595"/>
<dbReference type="GO" id="GO:0009535">
    <property type="term" value="C:chloroplast thylakoid membrane"/>
    <property type="evidence" value="ECO:0007669"/>
    <property type="project" value="UniProtKB-SubCell"/>
</dbReference>
<dbReference type="GO" id="GO:0045259">
    <property type="term" value="C:proton-transporting ATP synthase complex"/>
    <property type="evidence" value="ECO:0007669"/>
    <property type="project" value="UniProtKB-KW"/>
</dbReference>
<dbReference type="GO" id="GO:0043531">
    <property type="term" value="F:ADP binding"/>
    <property type="evidence" value="ECO:0007669"/>
    <property type="project" value="TreeGrafter"/>
</dbReference>
<dbReference type="GO" id="GO:0005524">
    <property type="term" value="F:ATP binding"/>
    <property type="evidence" value="ECO:0007669"/>
    <property type="project" value="UniProtKB-UniRule"/>
</dbReference>
<dbReference type="GO" id="GO:0046933">
    <property type="term" value="F:proton-transporting ATP synthase activity, rotational mechanism"/>
    <property type="evidence" value="ECO:0007669"/>
    <property type="project" value="UniProtKB-UniRule"/>
</dbReference>
<dbReference type="CDD" id="cd18113">
    <property type="entry name" value="ATP-synt_F1_alpha_C"/>
    <property type="match status" value="1"/>
</dbReference>
<dbReference type="CDD" id="cd18116">
    <property type="entry name" value="ATP-synt_F1_alpha_N"/>
    <property type="match status" value="1"/>
</dbReference>
<dbReference type="CDD" id="cd01132">
    <property type="entry name" value="F1-ATPase_alpha_CD"/>
    <property type="match status" value="1"/>
</dbReference>
<dbReference type="FunFam" id="1.20.150.20:FF:000001">
    <property type="entry name" value="ATP synthase subunit alpha"/>
    <property type="match status" value="1"/>
</dbReference>
<dbReference type="FunFam" id="2.40.30.20:FF:000001">
    <property type="entry name" value="ATP synthase subunit alpha"/>
    <property type="match status" value="1"/>
</dbReference>
<dbReference type="FunFam" id="3.40.50.300:FF:000002">
    <property type="entry name" value="ATP synthase subunit alpha"/>
    <property type="match status" value="1"/>
</dbReference>
<dbReference type="Gene3D" id="2.40.30.20">
    <property type="match status" value="1"/>
</dbReference>
<dbReference type="Gene3D" id="1.20.150.20">
    <property type="entry name" value="ATP synthase alpha/beta chain, C-terminal domain"/>
    <property type="match status" value="1"/>
</dbReference>
<dbReference type="Gene3D" id="3.40.50.300">
    <property type="entry name" value="P-loop containing nucleotide triphosphate hydrolases"/>
    <property type="match status" value="1"/>
</dbReference>
<dbReference type="HAMAP" id="MF_01346">
    <property type="entry name" value="ATP_synth_alpha_bact"/>
    <property type="match status" value="1"/>
</dbReference>
<dbReference type="InterPro" id="IPR023366">
    <property type="entry name" value="ATP_synth_asu-like_sf"/>
</dbReference>
<dbReference type="InterPro" id="IPR000793">
    <property type="entry name" value="ATP_synth_asu_C"/>
</dbReference>
<dbReference type="InterPro" id="IPR038376">
    <property type="entry name" value="ATP_synth_asu_C_sf"/>
</dbReference>
<dbReference type="InterPro" id="IPR033732">
    <property type="entry name" value="ATP_synth_F1_a_nt-bd_dom"/>
</dbReference>
<dbReference type="InterPro" id="IPR005294">
    <property type="entry name" value="ATP_synth_F1_asu"/>
</dbReference>
<dbReference type="InterPro" id="IPR020003">
    <property type="entry name" value="ATPase_a/bsu_AS"/>
</dbReference>
<dbReference type="InterPro" id="IPR004100">
    <property type="entry name" value="ATPase_F1/V1/A1_a/bsu_N"/>
</dbReference>
<dbReference type="InterPro" id="IPR036121">
    <property type="entry name" value="ATPase_F1/V1/A1_a/bsu_N_sf"/>
</dbReference>
<dbReference type="InterPro" id="IPR000194">
    <property type="entry name" value="ATPase_F1/V1/A1_a/bsu_nucl-bd"/>
</dbReference>
<dbReference type="InterPro" id="IPR027417">
    <property type="entry name" value="P-loop_NTPase"/>
</dbReference>
<dbReference type="NCBIfam" id="TIGR00962">
    <property type="entry name" value="atpA"/>
    <property type="match status" value="1"/>
</dbReference>
<dbReference type="NCBIfam" id="NF009884">
    <property type="entry name" value="PRK13343.1"/>
    <property type="match status" value="1"/>
</dbReference>
<dbReference type="PANTHER" id="PTHR48082">
    <property type="entry name" value="ATP SYNTHASE SUBUNIT ALPHA, MITOCHONDRIAL"/>
    <property type="match status" value="1"/>
</dbReference>
<dbReference type="PANTHER" id="PTHR48082:SF2">
    <property type="entry name" value="ATP SYNTHASE SUBUNIT ALPHA, MITOCHONDRIAL"/>
    <property type="match status" value="1"/>
</dbReference>
<dbReference type="Pfam" id="PF00006">
    <property type="entry name" value="ATP-synt_ab"/>
    <property type="match status" value="1"/>
</dbReference>
<dbReference type="Pfam" id="PF00306">
    <property type="entry name" value="ATP-synt_ab_C"/>
    <property type="match status" value="1"/>
</dbReference>
<dbReference type="Pfam" id="PF02874">
    <property type="entry name" value="ATP-synt_ab_N"/>
    <property type="match status" value="1"/>
</dbReference>
<dbReference type="PIRSF" id="PIRSF039088">
    <property type="entry name" value="F_ATPase_subunit_alpha"/>
    <property type="match status" value="1"/>
</dbReference>
<dbReference type="SUPFAM" id="SSF47917">
    <property type="entry name" value="C-terminal domain of alpha and beta subunits of F1 ATP synthase"/>
    <property type="match status" value="1"/>
</dbReference>
<dbReference type="SUPFAM" id="SSF50615">
    <property type="entry name" value="N-terminal domain of alpha and beta subunits of F1 ATP synthase"/>
    <property type="match status" value="1"/>
</dbReference>
<dbReference type="SUPFAM" id="SSF52540">
    <property type="entry name" value="P-loop containing nucleoside triphosphate hydrolases"/>
    <property type="match status" value="1"/>
</dbReference>
<dbReference type="PROSITE" id="PS00152">
    <property type="entry name" value="ATPASE_ALPHA_BETA"/>
    <property type="match status" value="1"/>
</dbReference>
<evidence type="ECO:0000255" key="1">
    <source>
        <dbReference type="HAMAP-Rule" id="MF_01346"/>
    </source>
</evidence>
<accession>Q0G9N4</accession>
<protein>
    <recommendedName>
        <fullName evidence="1">ATP synthase subunit alpha, chloroplastic</fullName>
        <ecNumber evidence="1">7.1.2.2</ecNumber>
    </recommendedName>
    <alternativeName>
        <fullName evidence="1">ATP synthase F1 sector subunit alpha</fullName>
    </alternativeName>
    <alternativeName>
        <fullName evidence="1">F-ATPase subunit alpha</fullName>
    </alternativeName>
</protein>
<name>ATPA_LIRTU</name>
<proteinExistence type="inferred from homology"/>
<organism>
    <name type="scientific">Liriodendron tulipifera</name>
    <name type="common">Tuliptree</name>
    <name type="synonym">Tulip poplar</name>
    <dbReference type="NCBI Taxonomy" id="3415"/>
    <lineage>
        <taxon>Eukaryota</taxon>
        <taxon>Viridiplantae</taxon>
        <taxon>Streptophyta</taxon>
        <taxon>Embryophyta</taxon>
        <taxon>Tracheophyta</taxon>
        <taxon>Spermatophyta</taxon>
        <taxon>Magnoliopsida</taxon>
        <taxon>Magnoliidae</taxon>
        <taxon>Magnoliales</taxon>
        <taxon>Magnoliaceae</taxon>
        <taxon>Liriodendron</taxon>
    </lineage>
</organism>
<comment type="function">
    <text evidence="1">Produces ATP from ADP in the presence of a proton gradient across the membrane. The alpha chain is a regulatory subunit.</text>
</comment>
<comment type="catalytic activity">
    <reaction evidence="1">
        <text>ATP + H2O + 4 H(+)(in) = ADP + phosphate + 5 H(+)(out)</text>
        <dbReference type="Rhea" id="RHEA:57720"/>
        <dbReference type="ChEBI" id="CHEBI:15377"/>
        <dbReference type="ChEBI" id="CHEBI:15378"/>
        <dbReference type="ChEBI" id="CHEBI:30616"/>
        <dbReference type="ChEBI" id="CHEBI:43474"/>
        <dbReference type="ChEBI" id="CHEBI:456216"/>
        <dbReference type="EC" id="7.1.2.2"/>
    </reaction>
</comment>
<comment type="subunit">
    <text evidence="1">F-type ATPases have 2 components, CF(1) - the catalytic core - and CF(0) - the membrane proton channel. CF(1) has five subunits: alpha(3), beta(3), gamma(1), delta(1), epsilon(1). CF(0) has four main subunits: a, b, b' and c.</text>
</comment>
<comment type="subcellular location">
    <subcellularLocation>
        <location evidence="1">Plastid</location>
        <location evidence="1">Chloroplast thylakoid membrane</location>
        <topology evidence="1">Peripheral membrane protein</topology>
    </subcellularLocation>
</comment>
<comment type="similarity">
    <text evidence="1">Belongs to the ATPase alpha/beta chains family.</text>
</comment>
<reference key="1">
    <citation type="journal article" date="2006" name="BMC Evol. Biol.">
        <title>Complete plastid genome sequences of Drimys, Liriodendron, and Piper: implications for the phylogenetic relationships of magnoliids.</title>
        <authorList>
            <person name="Cai Z."/>
            <person name="Penaflor C."/>
            <person name="Kuehl J.V."/>
            <person name="Leebens-Mack J."/>
            <person name="Carlson J.E."/>
            <person name="dePamphilis C.W."/>
            <person name="Boore J.L."/>
            <person name="Jansen R.K."/>
        </authorList>
    </citation>
    <scope>NUCLEOTIDE SEQUENCE [LARGE SCALE GENOMIC DNA]</scope>
</reference>
<feature type="chain" id="PRO_0000275169" description="ATP synthase subunit alpha, chloroplastic">
    <location>
        <begin position="1"/>
        <end position="507"/>
    </location>
</feature>
<feature type="binding site" evidence="1">
    <location>
        <begin position="170"/>
        <end position="177"/>
    </location>
    <ligand>
        <name>ATP</name>
        <dbReference type="ChEBI" id="CHEBI:30616"/>
    </ligand>
</feature>
<feature type="site" description="Required for activity" evidence="1">
    <location>
        <position position="363"/>
    </location>
</feature>
<sequence>MVTIRADEISNIIRERIEQYNREVTIVNTGTVLQVGDGIARIHGLDEVMAGELVEFEEGTIGIALNLESNNVGVVLMGDGLLIQEGSSVKATGRIAQIPVSEAYLGRVINALAKPIDGRGEISASESRLIESPAPGIISRRSVYEPLQTGLIAIDSMIPIGRGQRELIIGDRQTGKTAVATDTILNQKGQNVICVYVAIGQKASSVAQVVTTFQEQGAMEYTIVVAETADSPATLQYLAPYTGAALAEYFMYRERHTSIIYDDPSKQAQAYRQMSLLLRRPPGREAYPGDVFYLHSRLLERAAKSSSRLGEGSMTALPIVETQSGDVSAYIPTNVISITDGQIFLSADLFNAGIRPAINVGISVSRVGSAAQIKAMKQVAGKSKLELAQFAELEAFAQFASDLDKATQNQLARGQRLRELLKQSQSTPLTVEDQIVTIYTGANGYLDPLEIGQVKKFLVQLRTYLKTNKPQLQEIISSTKTFTEQAEALLKEAIPEQIELFLLQEQT</sequence>
<keyword id="KW-0066">ATP synthesis</keyword>
<keyword id="KW-0067">ATP-binding</keyword>
<keyword id="KW-0139">CF(1)</keyword>
<keyword id="KW-0150">Chloroplast</keyword>
<keyword id="KW-0375">Hydrogen ion transport</keyword>
<keyword id="KW-0406">Ion transport</keyword>
<keyword id="KW-0472">Membrane</keyword>
<keyword id="KW-0547">Nucleotide-binding</keyword>
<keyword id="KW-0934">Plastid</keyword>
<keyword id="KW-0793">Thylakoid</keyword>
<keyword id="KW-1278">Translocase</keyword>
<keyword id="KW-0813">Transport</keyword>